<proteinExistence type="inferred from homology"/>
<comment type="function">
    <text evidence="1">Hydrolyzes ribosome-free peptidyl-tRNAs (with 1 or more amino acids incorporated), which drop off the ribosome during protein synthesis, or as a result of ribosome stalling.</text>
</comment>
<comment type="function">
    <text evidence="1">Catalyzes the release of premature peptidyl moieties from peptidyl-tRNA molecules trapped in stalled 50S ribosomal subunits, and thus maintains levels of free tRNAs and 50S ribosomes.</text>
</comment>
<comment type="catalytic activity">
    <reaction evidence="1">
        <text>an N-acyl-L-alpha-aminoacyl-tRNA + H2O = an N-acyl-L-amino acid + a tRNA + H(+)</text>
        <dbReference type="Rhea" id="RHEA:54448"/>
        <dbReference type="Rhea" id="RHEA-COMP:10123"/>
        <dbReference type="Rhea" id="RHEA-COMP:13883"/>
        <dbReference type="ChEBI" id="CHEBI:15377"/>
        <dbReference type="ChEBI" id="CHEBI:15378"/>
        <dbReference type="ChEBI" id="CHEBI:59874"/>
        <dbReference type="ChEBI" id="CHEBI:78442"/>
        <dbReference type="ChEBI" id="CHEBI:138191"/>
        <dbReference type="EC" id="3.1.1.29"/>
    </reaction>
</comment>
<comment type="subunit">
    <text evidence="1">Monomer.</text>
</comment>
<comment type="subcellular location">
    <subcellularLocation>
        <location evidence="1">Cytoplasm</location>
    </subcellularLocation>
</comment>
<comment type="similarity">
    <text evidence="1">Belongs to the PTH family.</text>
</comment>
<dbReference type="EC" id="3.1.1.29" evidence="1"/>
<dbReference type="EMBL" id="CP001096">
    <property type="protein sequence ID" value="ACF03328.1"/>
    <property type="molecule type" value="Genomic_DNA"/>
</dbReference>
<dbReference type="RefSeq" id="WP_011159889.1">
    <property type="nucleotide sequence ID" value="NC_011004.1"/>
</dbReference>
<dbReference type="SMR" id="B3Q7X3"/>
<dbReference type="GeneID" id="66895488"/>
<dbReference type="KEGG" id="rpt:Rpal_4839"/>
<dbReference type="HOGENOM" id="CLU_062456_1_0_5"/>
<dbReference type="OrthoDB" id="9800507at2"/>
<dbReference type="Proteomes" id="UP000001725">
    <property type="component" value="Chromosome"/>
</dbReference>
<dbReference type="GO" id="GO:0005737">
    <property type="term" value="C:cytoplasm"/>
    <property type="evidence" value="ECO:0007669"/>
    <property type="project" value="UniProtKB-SubCell"/>
</dbReference>
<dbReference type="GO" id="GO:0004045">
    <property type="term" value="F:peptidyl-tRNA hydrolase activity"/>
    <property type="evidence" value="ECO:0007669"/>
    <property type="project" value="UniProtKB-UniRule"/>
</dbReference>
<dbReference type="GO" id="GO:0000049">
    <property type="term" value="F:tRNA binding"/>
    <property type="evidence" value="ECO:0007669"/>
    <property type="project" value="UniProtKB-UniRule"/>
</dbReference>
<dbReference type="GO" id="GO:0006515">
    <property type="term" value="P:protein quality control for misfolded or incompletely synthesized proteins"/>
    <property type="evidence" value="ECO:0007669"/>
    <property type="project" value="UniProtKB-UniRule"/>
</dbReference>
<dbReference type="GO" id="GO:0072344">
    <property type="term" value="P:rescue of stalled ribosome"/>
    <property type="evidence" value="ECO:0007669"/>
    <property type="project" value="UniProtKB-UniRule"/>
</dbReference>
<dbReference type="CDD" id="cd00462">
    <property type="entry name" value="PTH"/>
    <property type="match status" value="1"/>
</dbReference>
<dbReference type="FunFam" id="3.40.50.1470:FF:000001">
    <property type="entry name" value="Peptidyl-tRNA hydrolase"/>
    <property type="match status" value="1"/>
</dbReference>
<dbReference type="Gene3D" id="3.40.50.1470">
    <property type="entry name" value="Peptidyl-tRNA hydrolase"/>
    <property type="match status" value="1"/>
</dbReference>
<dbReference type="HAMAP" id="MF_00083">
    <property type="entry name" value="Pept_tRNA_hydro_bact"/>
    <property type="match status" value="1"/>
</dbReference>
<dbReference type="InterPro" id="IPR001328">
    <property type="entry name" value="Pept_tRNA_hydro"/>
</dbReference>
<dbReference type="InterPro" id="IPR018171">
    <property type="entry name" value="Pept_tRNA_hydro_CS"/>
</dbReference>
<dbReference type="InterPro" id="IPR036416">
    <property type="entry name" value="Pept_tRNA_hydro_sf"/>
</dbReference>
<dbReference type="NCBIfam" id="TIGR00447">
    <property type="entry name" value="pth"/>
    <property type="match status" value="1"/>
</dbReference>
<dbReference type="PANTHER" id="PTHR17224">
    <property type="entry name" value="PEPTIDYL-TRNA HYDROLASE"/>
    <property type="match status" value="1"/>
</dbReference>
<dbReference type="PANTHER" id="PTHR17224:SF1">
    <property type="entry name" value="PEPTIDYL-TRNA HYDROLASE"/>
    <property type="match status" value="1"/>
</dbReference>
<dbReference type="Pfam" id="PF01195">
    <property type="entry name" value="Pept_tRNA_hydro"/>
    <property type="match status" value="1"/>
</dbReference>
<dbReference type="SUPFAM" id="SSF53178">
    <property type="entry name" value="Peptidyl-tRNA hydrolase-like"/>
    <property type="match status" value="1"/>
</dbReference>
<dbReference type="PROSITE" id="PS01195">
    <property type="entry name" value="PEPT_TRNA_HYDROL_1"/>
    <property type="match status" value="1"/>
</dbReference>
<dbReference type="PROSITE" id="PS01196">
    <property type="entry name" value="PEPT_TRNA_HYDROL_2"/>
    <property type="match status" value="1"/>
</dbReference>
<accession>B3Q7X3</accession>
<organism>
    <name type="scientific">Rhodopseudomonas palustris (strain TIE-1)</name>
    <dbReference type="NCBI Taxonomy" id="395960"/>
    <lineage>
        <taxon>Bacteria</taxon>
        <taxon>Pseudomonadati</taxon>
        <taxon>Pseudomonadota</taxon>
        <taxon>Alphaproteobacteria</taxon>
        <taxon>Hyphomicrobiales</taxon>
        <taxon>Nitrobacteraceae</taxon>
        <taxon>Rhodopseudomonas</taxon>
    </lineage>
</organism>
<sequence length="206" mass="22568">MRLFVGLGNPGAKYQGNRHNIGFMVIDEIARRHGFSPWRRRFQGETADGVLDGERITLLKPLTYMNESGRAVQDAASFYKIGQNEIAVFHDEIELPPAKVRVKVGGGIAGHNGLRSISAHIGNDYLRVRLGVGHPGAKELVHNHVLGDFAKSERPWVEALCEIAADNAGLIAKGKDASFANKVHLAMQAKGFYDNDKQAKGGERDK</sequence>
<reference key="1">
    <citation type="submission" date="2008-05" db="EMBL/GenBank/DDBJ databases">
        <title>Complete sequence of Rhodopseudomonas palustris TIE-1.</title>
        <authorList>
            <consortium name="US DOE Joint Genome Institute"/>
            <person name="Lucas S."/>
            <person name="Copeland A."/>
            <person name="Lapidus A."/>
            <person name="Glavina del Rio T."/>
            <person name="Dalin E."/>
            <person name="Tice H."/>
            <person name="Pitluck S."/>
            <person name="Chain P."/>
            <person name="Malfatti S."/>
            <person name="Shin M."/>
            <person name="Vergez L."/>
            <person name="Lang D."/>
            <person name="Schmutz J."/>
            <person name="Larimer F."/>
            <person name="Land M."/>
            <person name="Hauser L."/>
            <person name="Kyrpides N."/>
            <person name="Mikhailova N."/>
            <person name="Emerson D."/>
            <person name="Newman D.K."/>
            <person name="Roden E."/>
            <person name="Richardson P."/>
        </authorList>
    </citation>
    <scope>NUCLEOTIDE SEQUENCE [LARGE SCALE GENOMIC DNA]</scope>
    <source>
        <strain>TIE-1</strain>
    </source>
</reference>
<gene>
    <name evidence="1" type="primary">pth</name>
    <name type="ordered locus">Rpal_4839</name>
</gene>
<feature type="chain" id="PRO_1000092977" description="Peptidyl-tRNA hydrolase">
    <location>
        <begin position="1"/>
        <end position="206"/>
    </location>
</feature>
<feature type="active site" description="Proton acceptor" evidence="1">
    <location>
        <position position="19"/>
    </location>
</feature>
<feature type="binding site" evidence="1">
    <location>
        <position position="14"/>
    </location>
    <ligand>
        <name>tRNA</name>
        <dbReference type="ChEBI" id="CHEBI:17843"/>
    </ligand>
</feature>
<feature type="binding site" evidence="1">
    <location>
        <position position="64"/>
    </location>
    <ligand>
        <name>tRNA</name>
        <dbReference type="ChEBI" id="CHEBI:17843"/>
    </ligand>
</feature>
<feature type="binding site" evidence="1">
    <location>
        <position position="66"/>
    </location>
    <ligand>
        <name>tRNA</name>
        <dbReference type="ChEBI" id="CHEBI:17843"/>
    </ligand>
</feature>
<feature type="binding site" evidence="1">
    <location>
        <position position="112"/>
    </location>
    <ligand>
        <name>tRNA</name>
        <dbReference type="ChEBI" id="CHEBI:17843"/>
    </ligand>
</feature>
<feature type="site" description="Discriminates between blocked and unblocked aminoacyl-tRNA" evidence="1">
    <location>
        <position position="9"/>
    </location>
</feature>
<feature type="site" description="Stabilizes the basic form of H active site to accept a proton" evidence="1">
    <location>
        <position position="91"/>
    </location>
</feature>
<evidence type="ECO:0000255" key="1">
    <source>
        <dbReference type="HAMAP-Rule" id="MF_00083"/>
    </source>
</evidence>
<keyword id="KW-0963">Cytoplasm</keyword>
<keyword id="KW-0378">Hydrolase</keyword>
<keyword id="KW-0694">RNA-binding</keyword>
<keyword id="KW-0820">tRNA-binding</keyword>
<protein>
    <recommendedName>
        <fullName evidence="1">Peptidyl-tRNA hydrolase</fullName>
        <shortName evidence="1">Pth</shortName>
        <ecNumber evidence="1">3.1.1.29</ecNumber>
    </recommendedName>
</protein>
<name>PTH_RHOPT</name>